<name>RL34_CLASE</name>
<gene>
    <name evidence="1" type="primary">rpmH</name>
    <name type="ordered locus">CMS3115</name>
</gene>
<sequence length="45" mass="5210">MSKRTFQPNNRKKAKKHGFRLRMRTRAGRAILAARRGKGRTELSA</sequence>
<feature type="chain" id="PRO_1000080243" description="Large ribosomal subunit protein bL34">
    <location>
        <begin position="1"/>
        <end position="45"/>
    </location>
</feature>
<evidence type="ECO:0000255" key="1">
    <source>
        <dbReference type="HAMAP-Rule" id="MF_00391"/>
    </source>
</evidence>
<evidence type="ECO:0000305" key="2"/>
<proteinExistence type="inferred from homology"/>
<protein>
    <recommendedName>
        <fullName evidence="1">Large ribosomal subunit protein bL34</fullName>
    </recommendedName>
    <alternativeName>
        <fullName evidence="2">50S ribosomal protein L34</fullName>
    </alternativeName>
</protein>
<keyword id="KW-0687">Ribonucleoprotein</keyword>
<keyword id="KW-0689">Ribosomal protein</keyword>
<organism>
    <name type="scientific">Clavibacter sepedonicus</name>
    <name type="common">Clavibacter michiganensis subsp. sepedonicus</name>
    <dbReference type="NCBI Taxonomy" id="31964"/>
    <lineage>
        <taxon>Bacteria</taxon>
        <taxon>Bacillati</taxon>
        <taxon>Actinomycetota</taxon>
        <taxon>Actinomycetes</taxon>
        <taxon>Micrococcales</taxon>
        <taxon>Microbacteriaceae</taxon>
        <taxon>Clavibacter</taxon>
    </lineage>
</organism>
<comment type="similarity">
    <text evidence="1">Belongs to the bacterial ribosomal protein bL34 family.</text>
</comment>
<dbReference type="EMBL" id="AM849034">
    <property type="protein sequence ID" value="CAQ03183.1"/>
    <property type="molecule type" value="Genomic_DNA"/>
</dbReference>
<dbReference type="RefSeq" id="WP_012039665.1">
    <property type="nucleotide sequence ID" value="NZ_MZMN01000003.1"/>
</dbReference>
<dbReference type="SMR" id="B0RDQ4"/>
<dbReference type="STRING" id="31964.CMS3115"/>
<dbReference type="GeneID" id="92984680"/>
<dbReference type="KEGG" id="cms:CMS3115"/>
<dbReference type="eggNOG" id="COG0230">
    <property type="taxonomic scope" value="Bacteria"/>
</dbReference>
<dbReference type="HOGENOM" id="CLU_129938_2_1_11"/>
<dbReference type="Proteomes" id="UP000001318">
    <property type="component" value="Chromosome"/>
</dbReference>
<dbReference type="GO" id="GO:1990904">
    <property type="term" value="C:ribonucleoprotein complex"/>
    <property type="evidence" value="ECO:0007669"/>
    <property type="project" value="UniProtKB-KW"/>
</dbReference>
<dbReference type="GO" id="GO:0005840">
    <property type="term" value="C:ribosome"/>
    <property type="evidence" value="ECO:0007669"/>
    <property type="project" value="UniProtKB-KW"/>
</dbReference>
<dbReference type="GO" id="GO:0003735">
    <property type="term" value="F:structural constituent of ribosome"/>
    <property type="evidence" value="ECO:0007669"/>
    <property type="project" value="InterPro"/>
</dbReference>
<dbReference type="GO" id="GO:0006412">
    <property type="term" value="P:translation"/>
    <property type="evidence" value="ECO:0007669"/>
    <property type="project" value="UniProtKB-UniRule"/>
</dbReference>
<dbReference type="FunFam" id="1.10.287.3980:FF:000001">
    <property type="entry name" value="Mitochondrial ribosomal protein L34"/>
    <property type="match status" value="1"/>
</dbReference>
<dbReference type="Gene3D" id="1.10.287.3980">
    <property type="match status" value="1"/>
</dbReference>
<dbReference type="HAMAP" id="MF_00391">
    <property type="entry name" value="Ribosomal_bL34"/>
    <property type="match status" value="1"/>
</dbReference>
<dbReference type="InterPro" id="IPR000271">
    <property type="entry name" value="Ribosomal_bL34"/>
</dbReference>
<dbReference type="InterPro" id="IPR020939">
    <property type="entry name" value="Ribosomal_bL34_CS"/>
</dbReference>
<dbReference type="NCBIfam" id="TIGR01030">
    <property type="entry name" value="rpmH_bact"/>
    <property type="match status" value="1"/>
</dbReference>
<dbReference type="PANTHER" id="PTHR14503:SF4">
    <property type="entry name" value="LARGE RIBOSOMAL SUBUNIT PROTEIN BL34M"/>
    <property type="match status" value="1"/>
</dbReference>
<dbReference type="PANTHER" id="PTHR14503">
    <property type="entry name" value="MITOCHONDRIAL RIBOSOMAL PROTEIN 34 FAMILY MEMBER"/>
    <property type="match status" value="1"/>
</dbReference>
<dbReference type="Pfam" id="PF00468">
    <property type="entry name" value="Ribosomal_L34"/>
    <property type="match status" value="1"/>
</dbReference>
<dbReference type="PROSITE" id="PS00784">
    <property type="entry name" value="RIBOSOMAL_L34"/>
    <property type="match status" value="1"/>
</dbReference>
<reference key="1">
    <citation type="journal article" date="2008" name="J. Bacteriol.">
        <title>Genome of the actinomycete plant pathogen Clavibacter michiganensis subsp. sepedonicus suggests recent niche adaptation.</title>
        <authorList>
            <person name="Bentley S.D."/>
            <person name="Corton C."/>
            <person name="Brown S.E."/>
            <person name="Barron A."/>
            <person name="Clark L."/>
            <person name="Doggett J."/>
            <person name="Harris B."/>
            <person name="Ormond D."/>
            <person name="Quail M.A."/>
            <person name="May G."/>
            <person name="Francis D."/>
            <person name="Knudson D."/>
            <person name="Parkhill J."/>
            <person name="Ishimaru C.A."/>
        </authorList>
    </citation>
    <scope>NUCLEOTIDE SEQUENCE [LARGE SCALE GENOMIC DNA]</scope>
    <source>
        <strain>ATCC 33113 / DSM 20744 / JCM 9667 / LMG 2889 / ICMP 2535 / C-1</strain>
    </source>
</reference>
<accession>B0RDQ4</accession>